<protein>
    <recommendedName>
        <fullName evidence="1">Peptide chain release factor 1</fullName>
        <shortName evidence="1">RF-1</shortName>
    </recommendedName>
</protein>
<gene>
    <name evidence="1" type="primary">prfA</name>
    <name type="ordered locus">Acid_6670</name>
</gene>
<keyword id="KW-0963">Cytoplasm</keyword>
<keyword id="KW-0488">Methylation</keyword>
<keyword id="KW-0648">Protein biosynthesis</keyword>
<evidence type="ECO:0000255" key="1">
    <source>
        <dbReference type="HAMAP-Rule" id="MF_00093"/>
    </source>
</evidence>
<organism>
    <name type="scientific">Solibacter usitatus (strain Ellin6076)</name>
    <dbReference type="NCBI Taxonomy" id="234267"/>
    <lineage>
        <taxon>Bacteria</taxon>
        <taxon>Pseudomonadati</taxon>
        <taxon>Acidobacteriota</taxon>
        <taxon>Terriglobia</taxon>
        <taxon>Bryobacterales</taxon>
        <taxon>Solibacteraceae</taxon>
        <taxon>Candidatus Solibacter</taxon>
    </lineage>
</organism>
<dbReference type="EMBL" id="CP000473">
    <property type="protein sequence ID" value="ABJ87592.1"/>
    <property type="molecule type" value="Genomic_DNA"/>
</dbReference>
<dbReference type="SMR" id="Q01RX8"/>
<dbReference type="FunCoup" id="Q01RX8">
    <property type="interactions" value="545"/>
</dbReference>
<dbReference type="STRING" id="234267.Acid_6670"/>
<dbReference type="KEGG" id="sus:Acid_6670"/>
<dbReference type="eggNOG" id="COG0216">
    <property type="taxonomic scope" value="Bacteria"/>
</dbReference>
<dbReference type="HOGENOM" id="CLU_036856_0_1_0"/>
<dbReference type="InParanoid" id="Q01RX8"/>
<dbReference type="OrthoDB" id="9806673at2"/>
<dbReference type="GO" id="GO:0005737">
    <property type="term" value="C:cytoplasm"/>
    <property type="evidence" value="ECO:0007669"/>
    <property type="project" value="UniProtKB-SubCell"/>
</dbReference>
<dbReference type="GO" id="GO:0016149">
    <property type="term" value="F:translation release factor activity, codon specific"/>
    <property type="evidence" value="ECO:0007669"/>
    <property type="project" value="UniProtKB-UniRule"/>
</dbReference>
<dbReference type="FunFam" id="3.30.160.20:FF:000004">
    <property type="entry name" value="Peptide chain release factor 1"/>
    <property type="match status" value="1"/>
</dbReference>
<dbReference type="FunFam" id="3.30.70.1660:FF:000002">
    <property type="entry name" value="Peptide chain release factor 1"/>
    <property type="match status" value="1"/>
</dbReference>
<dbReference type="FunFam" id="3.30.70.1660:FF:000004">
    <property type="entry name" value="Peptide chain release factor 1"/>
    <property type="match status" value="1"/>
</dbReference>
<dbReference type="Gene3D" id="3.30.160.20">
    <property type="match status" value="1"/>
</dbReference>
<dbReference type="Gene3D" id="3.30.70.1660">
    <property type="match status" value="1"/>
</dbReference>
<dbReference type="Gene3D" id="6.10.140.1950">
    <property type="match status" value="1"/>
</dbReference>
<dbReference type="HAMAP" id="MF_00093">
    <property type="entry name" value="Rel_fac_1"/>
    <property type="match status" value="1"/>
</dbReference>
<dbReference type="InterPro" id="IPR005139">
    <property type="entry name" value="PCRF"/>
</dbReference>
<dbReference type="InterPro" id="IPR000352">
    <property type="entry name" value="Pep_chain_release_fac_I"/>
</dbReference>
<dbReference type="InterPro" id="IPR045853">
    <property type="entry name" value="Pep_chain_release_fac_I_sf"/>
</dbReference>
<dbReference type="InterPro" id="IPR050057">
    <property type="entry name" value="Prokaryotic/Mito_RF"/>
</dbReference>
<dbReference type="InterPro" id="IPR004373">
    <property type="entry name" value="RF-1"/>
</dbReference>
<dbReference type="NCBIfam" id="TIGR00019">
    <property type="entry name" value="prfA"/>
    <property type="match status" value="1"/>
</dbReference>
<dbReference type="NCBIfam" id="NF001859">
    <property type="entry name" value="PRK00591.1"/>
    <property type="match status" value="1"/>
</dbReference>
<dbReference type="PANTHER" id="PTHR43804">
    <property type="entry name" value="LD18447P"/>
    <property type="match status" value="1"/>
</dbReference>
<dbReference type="PANTHER" id="PTHR43804:SF7">
    <property type="entry name" value="LD18447P"/>
    <property type="match status" value="1"/>
</dbReference>
<dbReference type="Pfam" id="PF03462">
    <property type="entry name" value="PCRF"/>
    <property type="match status" value="1"/>
</dbReference>
<dbReference type="Pfam" id="PF00472">
    <property type="entry name" value="RF-1"/>
    <property type="match status" value="1"/>
</dbReference>
<dbReference type="SMART" id="SM00937">
    <property type="entry name" value="PCRF"/>
    <property type="match status" value="1"/>
</dbReference>
<dbReference type="SUPFAM" id="SSF75620">
    <property type="entry name" value="Release factor"/>
    <property type="match status" value="1"/>
</dbReference>
<name>RF1_SOLUE</name>
<comment type="function">
    <text evidence="1">Peptide chain release factor 1 directs the termination of translation in response to the peptide chain termination codons UAG and UAA.</text>
</comment>
<comment type="subcellular location">
    <subcellularLocation>
        <location evidence="1">Cytoplasm</location>
    </subcellularLocation>
</comment>
<comment type="PTM">
    <text evidence="1">Methylated by PrmC. Methylation increases the termination efficiency of RF1.</text>
</comment>
<comment type="similarity">
    <text evidence="1">Belongs to the prokaryotic/mitochondrial release factor family.</text>
</comment>
<sequence>MQFAQKLDQLEKRFDELTQQMADPAVISDADQYRKVAKAQSELSDIAAKYREWKKVEDGLAQARPMLQEQDAELKEMAELEIAQLEPEKLRIEEELRVLLLPKDPNDDKNVVLEIRAGTGGDEATLFAAEIFRMYSRYAETQNWKMEVTSSSESSVGGLKEVIALVSGNKVYAKLKYESGVHRVQRVPVTEQQGRVHTSAITVAVLPEADEVEVKLEAKDIRIDTFCSSGPGGQSVNTTYSAVRITHLPTGLVVSCQDEKSQIKNRAKAERVLRSRLYELELEKQQAALGAERRTMVGSGDRSEKIRTYNFPQNRVSDHRIGLTLHQLDFVMEGKMDAIVDALTEFYQAQKLKQQAEKGPVS</sequence>
<reference key="1">
    <citation type="journal article" date="2009" name="Appl. Environ. Microbiol.">
        <title>Three genomes from the phylum Acidobacteria provide insight into the lifestyles of these microorganisms in soils.</title>
        <authorList>
            <person name="Ward N.L."/>
            <person name="Challacombe J.F."/>
            <person name="Janssen P.H."/>
            <person name="Henrissat B."/>
            <person name="Coutinho P.M."/>
            <person name="Wu M."/>
            <person name="Xie G."/>
            <person name="Haft D.H."/>
            <person name="Sait M."/>
            <person name="Badger J."/>
            <person name="Barabote R.D."/>
            <person name="Bradley B."/>
            <person name="Brettin T.S."/>
            <person name="Brinkac L.M."/>
            <person name="Bruce D."/>
            <person name="Creasy T."/>
            <person name="Daugherty S.C."/>
            <person name="Davidsen T.M."/>
            <person name="DeBoy R.T."/>
            <person name="Detter J.C."/>
            <person name="Dodson R.J."/>
            <person name="Durkin A.S."/>
            <person name="Ganapathy A."/>
            <person name="Gwinn-Giglio M."/>
            <person name="Han C.S."/>
            <person name="Khouri H."/>
            <person name="Kiss H."/>
            <person name="Kothari S.P."/>
            <person name="Madupu R."/>
            <person name="Nelson K.E."/>
            <person name="Nelson W.C."/>
            <person name="Paulsen I."/>
            <person name="Penn K."/>
            <person name="Ren Q."/>
            <person name="Rosovitz M.J."/>
            <person name="Selengut J.D."/>
            <person name="Shrivastava S."/>
            <person name="Sullivan S.A."/>
            <person name="Tapia R."/>
            <person name="Thompson L.S."/>
            <person name="Watkins K.L."/>
            <person name="Yang Q."/>
            <person name="Yu C."/>
            <person name="Zafar N."/>
            <person name="Zhou L."/>
            <person name="Kuske C.R."/>
        </authorList>
    </citation>
    <scope>NUCLEOTIDE SEQUENCE [LARGE SCALE GENOMIC DNA]</scope>
    <source>
        <strain>Ellin6076</strain>
    </source>
</reference>
<accession>Q01RX8</accession>
<proteinExistence type="inferred from homology"/>
<feature type="chain" id="PRO_1000117254" description="Peptide chain release factor 1">
    <location>
        <begin position="1"/>
        <end position="362"/>
    </location>
</feature>
<feature type="modified residue" description="N5-methylglutamine" evidence="1">
    <location>
        <position position="234"/>
    </location>
</feature>